<proteinExistence type="inferred from homology"/>
<feature type="chain" id="PRO_1000134872" description="4-hydroxy-tetrahydrodipicolinate synthase">
    <location>
        <begin position="1"/>
        <end position="291"/>
    </location>
</feature>
<feature type="active site" description="Proton donor/acceptor" evidence="1">
    <location>
        <position position="134"/>
    </location>
</feature>
<feature type="active site" description="Schiff-base intermediate with substrate" evidence="1">
    <location>
        <position position="162"/>
    </location>
</feature>
<feature type="binding site" evidence="1">
    <location>
        <position position="47"/>
    </location>
    <ligand>
        <name>pyruvate</name>
        <dbReference type="ChEBI" id="CHEBI:15361"/>
    </ligand>
</feature>
<feature type="binding site" evidence="1">
    <location>
        <position position="205"/>
    </location>
    <ligand>
        <name>pyruvate</name>
        <dbReference type="ChEBI" id="CHEBI:15361"/>
    </ligand>
</feature>
<feature type="site" description="Part of a proton relay during catalysis" evidence="1">
    <location>
        <position position="46"/>
    </location>
</feature>
<feature type="site" description="Part of a proton relay during catalysis" evidence="1">
    <location>
        <position position="109"/>
    </location>
</feature>
<comment type="function">
    <text evidence="1">Catalyzes the condensation of (S)-aspartate-beta-semialdehyde [(S)-ASA] and pyruvate to 4-hydroxy-tetrahydrodipicolinate (HTPA).</text>
</comment>
<comment type="catalytic activity">
    <reaction evidence="1">
        <text>L-aspartate 4-semialdehyde + pyruvate = (2S,4S)-4-hydroxy-2,3,4,5-tetrahydrodipicolinate + H2O + H(+)</text>
        <dbReference type="Rhea" id="RHEA:34171"/>
        <dbReference type="ChEBI" id="CHEBI:15361"/>
        <dbReference type="ChEBI" id="CHEBI:15377"/>
        <dbReference type="ChEBI" id="CHEBI:15378"/>
        <dbReference type="ChEBI" id="CHEBI:67139"/>
        <dbReference type="ChEBI" id="CHEBI:537519"/>
        <dbReference type="EC" id="4.3.3.7"/>
    </reaction>
</comment>
<comment type="pathway">
    <text evidence="1">Amino-acid biosynthesis; L-lysine biosynthesis via DAP pathway; (S)-tetrahydrodipicolinate from L-aspartate: step 3/4.</text>
</comment>
<comment type="subunit">
    <text evidence="1">Homotetramer; dimer of dimers.</text>
</comment>
<comment type="subcellular location">
    <subcellularLocation>
        <location evidence="1">Cytoplasm</location>
    </subcellularLocation>
</comment>
<comment type="similarity">
    <text evidence="1">Belongs to the DapA family.</text>
</comment>
<comment type="caution">
    <text evidence="2">Was originally thought to be a dihydrodipicolinate synthase (DHDPS), catalyzing the condensation of (S)-aspartate-beta-semialdehyde [(S)-ASA] and pyruvate to dihydrodipicolinate (DHDP). However, it was shown in E.coli that the product of the enzymatic reaction is not dihydrodipicolinate but in fact (4S)-4-hydroxy-2,3,4,5-tetrahydro-(2S)-dipicolinic acid (HTPA), and that the consecutive dehydration reaction leading to DHDP is not spontaneous but catalyzed by DapB.</text>
</comment>
<keyword id="KW-0028">Amino-acid biosynthesis</keyword>
<keyword id="KW-0963">Cytoplasm</keyword>
<keyword id="KW-0220">Diaminopimelate biosynthesis</keyword>
<keyword id="KW-0456">Lyase</keyword>
<keyword id="KW-0457">Lysine biosynthesis</keyword>
<keyword id="KW-1185">Reference proteome</keyword>
<keyword id="KW-0704">Schiff base</keyword>
<organism>
    <name type="scientific">Methanosphaerula palustris (strain ATCC BAA-1556 / DSM 19958 / E1-9c)</name>
    <dbReference type="NCBI Taxonomy" id="521011"/>
    <lineage>
        <taxon>Archaea</taxon>
        <taxon>Methanobacteriati</taxon>
        <taxon>Methanobacteriota</taxon>
        <taxon>Stenosarchaea group</taxon>
        <taxon>Methanomicrobia</taxon>
        <taxon>Methanomicrobiales</taxon>
        <taxon>Methanoregulaceae</taxon>
        <taxon>Methanosphaerula</taxon>
    </lineage>
</organism>
<gene>
    <name evidence="1" type="primary">dapA</name>
    <name type="ordered locus">Mpal_0476</name>
</gene>
<protein>
    <recommendedName>
        <fullName evidence="1">4-hydroxy-tetrahydrodipicolinate synthase</fullName>
        <shortName evidence="1">HTPA synthase</shortName>
        <ecNumber evidence="1">4.3.3.7</ecNumber>
    </recommendedName>
</protein>
<evidence type="ECO:0000255" key="1">
    <source>
        <dbReference type="HAMAP-Rule" id="MF_00418"/>
    </source>
</evidence>
<evidence type="ECO:0000305" key="2"/>
<dbReference type="EC" id="4.3.3.7" evidence="1"/>
<dbReference type="EMBL" id="CP001338">
    <property type="protein sequence ID" value="ACL15850.1"/>
    <property type="molecule type" value="Genomic_DNA"/>
</dbReference>
<dbReference type="RefSeq" id="WP_012617169.1">
    <property type="nucleotide sequence ID" value="NC_011832.1"/>
</dbReference>
<dbReference type="SMR" id="B8GKG7"/>
<dbReference type="STRING" id="521011.Mpal_0476"/>
<dbReference type="GeneID" id="7272800"/>
<dbReference type="KEGG" id="mpl:Mpal_0476"/>
<dbReference type="eggNOG" id="arCOG04172">
    <property type="taxonomic scope" value="Archaea"/>
</dbReference>
<dbReference type="HOGENOM" id="CLU_049343_7_1_2"/>
<dbReference type="OrthoDB" id="33636at2157"/>
<dbReference type="UniPathway" id="UPA00034">
    <property type="reaction ID" value="UER00017"/>
</dbReference>
<dbReference type="Proteomes" id="UP000002457">
    <property type="component" value="Chromosome"/>
</dbReference>
<dbReference type="GO" id="GO:0005737">
    <property type="term" value="C:cytoplasm"/>
    <property type="evidence" value="ECO:0007669"/>
    <property type="project" value="UniProtKB-SubCell"/>
</dbReference>
<dbReference type="GO" id="GO:0008675">
    <property type="term" value="F:2-dehydro-3-deoxy-phosphogluconate aldolase activity"/>
    <property type="evidence" value="ECO:0007669"/>
    <property type="project" value="UniProtKB-ARBA"/>
</dbReference>
<dbReference type="GO" id="GO:0008840">
    <property type="term" value="F:4-hydroxy-tetrahydrodipicolinate synthase activity"/>
    <property type="evidence" value="ECO:0007669"/>
    <property type="project" value="UniProtKB-UniRule"/>
</dbReference>
<dbReference type="GO" id="GO:0019877">
    <property type="term" value="P:diaminopimelate biosynthetic process"/>
    <property type="evidence" value="ECO:0007669"/>
    <property type="project" value="UniProtKB-UniRule"/>
</dbReference>
<dbReference type="GO" id="GO:0009089">
    <property type="term" value="P:lysine biosynthetic process via diaminopimelate"/>
    <property type="evidence" value="ECO:0007669"/>
    <property type="project" value="UniProtKB-UniRule"/>
</dbReference>
<dbReference type="CDD" id="cd00950">
    <property type="entry name" value="DHDPS"/>
    <property type="match status" value="1"/>
</dbReference>
<dbReference type="Gene3D" id="3.20.20.70">
    <property type="entry name" value="Aldolase class I"/>
    <property type="match status" value="1"/>
</dbReference>
<dbReference type="HAMAP" id="MF_00418">
    <property type="entry name" value="DapA"/>
    <property type="match status" value="1"/>
</dbReference>
<dbReference type="InterPro" id="IPR013785">
    <property type="entry name" value="Aldolase_TIM"/>
</dbReference>
<dbReference type="InterPro" id="IPR005263">
    <property type="entry name" value="DapA"/>
</dbReference>
<dbReference type="InterPro" id="IPR002220">
    <property type="entry name" value="DapA-like"/>
</dbReference>
<dbReference type="InterPro" id="IPR020625">
    <property type="entry name" value="Schiff_base-form_aldolases_AS"/>
</dbReference>
<dbReference type="InterPro" id="IPR020624">
    <property type="entry name" value="Schiff_base-form_aldolases_CS"/>
</dbReference>
<dbReference type="NCBIfam" id="TIGR00674">
    <property type="entry name" value="dapA"/>
    <property type="match status" value="1"/>
</dbReference>
<dbReference type="PANTHER" id="PTHR12128:SF66">
    <property type="entry name" value="4-HYDROXY-2-OXOGLUTARATE ALDOLASE, MITOCHONDRIAL"/>
    <property type="match status" value="1"/>
</dbReference>
<dbReference type="PANTHER" id="PTHR12128">
    <property type="entry name" value="DIHYDRODIPICOLINATE SYNTHASE"/>
    <property type="match status" value="1"/>
</dbReference>
<dbReference type="Pfam" id="PF00701">
    <property type="entry name" value="DHDPS"/>
    <property type="match status" value="1"/>
</dbReference>
<dbReference type="PIRSF" id="PIRSF001365">
    <property type="entry name" value="DHDPS"/>
    <property type="match status" value="1"/>
</dbReference>
<dbReference type="PRINTS" id="PR00146">
    <property type="entry name" value="DHPICSNTHASE"/>
</dbReference>
<dbReference type="SMART" id="SM01130">
    <property type="entry name" value="DHDPS"/>
    <property type="match status" value="1"/>
</dbReference>
<dbReference type="SUPFAM" id="SSF51569">
    <property type="entry name" value="Aldolase"/>
    <property type="match status" value="1"/>
</dbReference>
<dbReference type="PROSITE" id="PS00665">
    <property type="entry name" value="DHDPS_1"/>
    <property type="match status" value="1"/>
</dbReference>
<dbReference type="PROSITE" id="PS00666">
    <property type="entry name" value="DHDPS_2"/>
    <property type="match status" value="1"/>
</dbReference>
<name>DAPA_METPE</name>
<accession>B8GKG7</accession>
<reference key="1">
    <citation type="journal article" date="2015" name="Genome Announc.">
        <title>Complete Genome Sequence of Methanosphaerula palustris E1-9CT, a Hydrogenotrophic Methanogen Isolated from a Minerotrophic Fen Peatland.</title>
        <authorList>
            <person name="Cadillo-Quiroz H."/>
            <person name="Browne P."/>
            <person name="Kyrpides N."/>
            <person name="Woyke T."/>
            <person name="Goodwin L."/>
            <person name="Detter C."/>
            <person name="Yavitt J.B."/>
            <person name="Zinder S.H."/>
        </authorList>
    </citation>
    <scope>NUCLEOTIDE SEQUENCE [LARGE SCALE GENOMIC DNA]</scope>
    <source>
        <strain>ATCC BAA-1556 / DSM 19958 / E1-9c</strain>
    </source>
</reference>
<sequence length="291" mass="30981">MFEGVLPAIVTPFQNDHAKSLDLLGLQSNLAFLVSKGVHGVVPCGSTGESATLSFEEHVKVIEATIEAVAGKVPVLAGAGSNNTDEAIRFTRSAKDLGADGVLIISPYYNRPNRSGLIKHFSAIADLDIPVVLYNVPSRTGQNLSPDLVAELSRHPNIVGIKEASGNISQVSQIIEETMDQDFTVISGDDGMTLPVMALGGGGVISVAANVEPERMVGMYRAYTEGDWDDAISLHYELAPLFRALFIDSNPIPVKKAINLRGLASGPLRLPLDELDAEKTAALTEVLSTYD</sequence>